<accession>Q5FL98</accession>
<gene>
    <name evidence="1" type="primary">nadK</name>
    <name type="ordered locus">LBA0647</name>
</gene>
<organism>
    <name type="scientific">Lactobacillus acidophilus (strain ATCC 700396 / NCK56 / N2 / NCFM)</name>
    <dbReference type="NCBI Taxonomy" id="272621"/>
    <lineage>
        <taxon>Bacteria</taxon>
        <taxon>Bacillati</taxon>
        <taxon>Bacillota</taxon>
        <taxon>Bacilli</taxon>
        <taxon>Lactobacillales</taxon>
        <taxon>Lactobacillaceae</taxon>
        <taxon>Lactobacillus</taxon>
    </lineage>
</organism>
<comment type="function">
    <text evidence="1">Involved in the regulation of the intracellular balance of NAD and NADP, and is a key enzyme in the biosynthesis of NADP. Catalyzes specifically the phosphorylation on 2'-hydroxyl of the adenosine moiety of NAD to yield NADP.</text>
</comment>
<comment type="catalytic activity">
    <reaction evidence="1">
        <text>NAD(+) + ATP = ADP + NADP(+) + H(+)</text>
        <dbReference type="Rhea" id="RHEA:18629"/>
        <dbReference type="ChEBI" id="CHEBI:15378"/>
        <dbReference type="ChEBI" id="CHEBI:30616"/>
        <dbReference type="ChEBI" id="CHEBI:57540"/>
        <dbReference type="ChEBI" id="CHEBI:58349"/>
        <dbReference type="ChEBI" id="CHEBI:456216"/>
        <dbReference type="EC" id="2.7.1.23"/>
    </reaction>
</comment>
<comment type="cofactor">
    <cofactor evidence="1">
        <name>a divalent metal cation</name>
        <dbReference type="ChEBI" id="CHEBI:60240"/>
    </cofactor>
</comment>
<comment type="subcellular location">
    <subcellularLocation>
        <location evidence="1">Cytoplasm</location>
    </subcellularLocation>
</comment>
<comment type="similarity">
    <text evidence="1">Belongs to the NAD kinase family.</text>
</comment>
<reference key="1">
    <citation type="journal article" date="2005" name="Proc. Natl. Acad. Sci. U.S.A.">
        <title>Complete genome sequence of the probiotic lactic acid bacterium Lactobacillus acidophilus NCFM.</title>
        <authorList>
            <person name="Altermann E."/>
            <person name="Russell W.M."/>
            <person name="Azcarate-Peril M.A."/>
            <person name="Barrangou R."/>
            <person name="Buck B.L."/>
            <person name="McAuliffe O."/>
            <person name="Souther N."/>
            <person name="Dobson A."/>
            <person name="Duong T."/>
            <person name="Callanan M."/>
            <person name="Lick S."/>
            <person name="Hamrick A."/>
            <person name="Cano R."/>
            <person name="Klaenhammer T.R."/>
        </authorList>
    </citation>
    <scope>NUCLEOTIDE SEQUENCE [LARGE SCALE GENOMIC DNA]</scope>
    <source>
        <strain>ATCC 700396 / NCK56 / N2 / NCFM</strain>
    </source>
</reference>
<proteinExistence type="inferred from homology"/>
<sequence length="267" mass="30161">MKVTIAHNNYDKTLKTVAYLKEILKKKNVVFDAKYPDVVISVGGDGTLINAFHRYENQVDSVRFIGVHTGHLGFYTDWRNYDIDKMVDALLLTDEAPAKYPLLEIKLITESGETKYHLAVNESAVKRVSHTLEADVYINDELFENFRGDGLCVSTPTGSTAYSKSLGGAVIHPRLKALQMTEIASINNRVFRTLSAPIVIAPDQWITIVPNADHFVMTVDGARIDVRNAKKIEYRISHHSIQFDQFGHHHFWSRVQDAFIGENNSND</sequence>
<dbReference type="EC" id="2.7.1.23" evidence="1"/>
<dbReference type="EMBL" id="CP000033">
    <property type="protein sequence ID" value="AAV42526.1"/>
    <property type="molecule type" value="Genomic_DNA"/>
</dbReference>
<dbReference type="RefSeq" id="WP_011254215.1">
    <property type="nucleotide sequence ID" value="NC_006814.3"/>
</dbReference>
<dbReference type="RefSeq" id="YP_193557.1">
    <property type="nucleotide sequence ID" value="NC_006814.3"/>
</dbReference>
<dbReference type="SMR" id="Q5FL98"/>
<dbReference type="STRING" id="272621.LBA0647"/>
<dbReference type="KEGG" id="lac:LBA0647"/>
<dbReference type="PATRIC" id="fig|272621.13.peg.620"/>
<dbReference type="eggNOG" id="COG0061">
    <property type="taxonomic scope" value="Bacteria"/>
</dbReference>
<dbReference type="HOGENOM" id="CLU_008831_0_3_9"/>
<dbReference type="OrthoDB" id="9774737at2"/>
<dbReference type="BioCyc" id="LACI272621:G1G49-672-MONOMER"/>
<dbReference type="Proteomes" id="UP000006381">
    <property type="component" value="Chromosome"/>
</dbReference>
<dbReference type="GO" id="GO:0005737">
    <property type="term" value="C:cytoplasm"/>
    <property type="evidence" value="ECO:0007669"/>
    <property type="project" value="UniProtKB-SubCell"/>
</dbReference>
<dbReference type="GO" id="GO:0005524">
    <property type="term" value="F:ATP binding"/>
    <property type="evidence" value="ECO:0007669"/>
    <property type="project" value="UniProtKB-KW"/>
</dbReference>
<dbReference type="GO" id="GO:0046872">
    <property type="term" value="F:metal ion binding"/>
    <property type="evidence" value="ECO:0007669"/>
    <property type="project" value="UniProtKB-UniRule"/>
</dbReference>
<dbReference type="GO" id="GO:0051287">
    <property type="term" value="F:NAD binding"/>
    <property type="evidence" value="ECO:0007669"/>
    <property type="project" value="UniProtKB-ARBA"/>
</dbReference>
<dbReference type="GO" id="GO:0003951">
    <property type="term" value="F:NAD+ kinase activity"/>
    <property type="evidence" value="ECO:0007669"/>
    <property type="project" value="UniProtKB-UniRule"/>
</dbReference>
<dbReference type="GO" id="GO:0019674">
    <property type="term" value="P:NAD metabolic process"/>
    <property type="evidence" value="ECO:0007669"/>
    <property type="project" value="InterPro"/>
</dbReference>
<dbReference type="GO" id="GO:0006741">
    <property type="term" value="P:NADP biosynthetic process"/>
    <property type="evidence" value="ECO:0007669"/>
    <property type="project" value="UniProtKB-UniRule"/>
</dbReference>
<dbReference type="Gene3D" id="3.40.50.10330">
    <property type="entry name" value="Probable inorganic polyphosphate/atp-NAD kinase, domain 1"/>
    <property type="match status" value="1"/>
</dbReference>
<dbReference type="Gene3D" id="2.60.200.30">
    <property type="entry name" value="Probable inorganic polyphosphate/atp-NAD kinase, domain 2"/>
    <property type="match status" value="1"/>
</dbReference>
<dbReference type="HAMAP" id="MF_00361">
    <property type="entry name" value="NAD_kinase"/>
    <property type="match status" value="1"/>
</dbReference>
<dbReference type="InterPro" id="IPR017438">
    <property type="entry name" value="ATP-NAD_kinase_N"/>
</dbReference>
<dbReference type="InterPro" id="IPR017437">
    <property type="entry name" value="ATP-NAD_kinase_PpnK-typ_C"/>
</dbReference>
<dbReference type="InterPro" id="IPR016064">
    <property type="entry name" value="NAD/diacylglycerol_kinase_sf"/>
</dbReference>
<dbReference type="InterPro" id="IPR002504">
    <property type="entry name" value="NADK"/>
</dbReference>
<dbReference type="NCBIfam" id="NF003424">
    <property type="entry name" value="PRK04885.1"/>
    <property type="match status" value="1"/>
</dbReference>
<dbReference type="PANTHER" id="PTHR20275">
    <property type="entry name" value="NAD KINASE"/>
    <property type="match status" value="1"/>
</dbReference>
<dbReference type="PANTHER" id="PTHR20275:SF0">
    <property type="entry name" value="NAD KINASE"/>
    <property type="match status" value="1"/>
</dbReference>
<dbReference type="Pfam" id="PF01513">
    <property type="entry name" value="NAD_kinase"/>
    <property type="match status" value="1"/>
</dbReference>
<dbReference type="Pfam" id="PF20143">
    <property type="entry name" value="NAD_kinase_C"/>
    <property type="match status" value="1"/>
</dbReference>
<dbReference type="SUPFAM" id="SSF111331">
    <property type="entry name" value="NAD kinase/diacylglycerol kinase-like"/>
    <property type="match status" value="1"/>
</dbReference>
<name>NADK_LACAC</name>
<evidence type="ECO:0000255" key="1">
    <source>
        <dbReference type="HAMAP-Rule" id="MF_00361"/>
    </source>
</evidence>
<feature type="chain" id="PRO_0000229646" description="NAD kinase">
    <location>
        <begin position="1"/>
        <end position="267"/>
    </location>
</feature>
<feature type="active site" description="Proton acceptor" evidence="1">
    <location>
        <position position="45"/>
    </location>
</feature>
<feature type="binding site" evidence="1">
    <location>
        <begin position="45"/>
        <end position="46"/>
    </location>
    <ligand>
        <name>NAD(+)</name>
        <dbReference type="ChEBI" id="CHEBI:57540"/>
    </ligand>
</feature>
<feature type="binding site" evidence="1">
    <location>
        <begin position="121"/>
        <end position="122"/>
    </location>
    <ligand>
        <name>NAD(+)</name>
        <dbReference type="ChEBI" id="CHEBI:57540"/>
    </ligand>
</feature>
<feature type="binding site" evidence="1">
    <location>
        <position position="147"/>
    </location>
    <ligand>
        <name>NAD(+)</name>
        <dbReference type="ChEBI" id="CHEBI:57540"/>
    </ligand>
</feature>
<feature type="binding site" evidence="1">
    <location>
        <position position="149"/>
    </location>
    <ligand>
        <name>NAD(+)</name>
        <dbReference type="ChEBI" id="CHEBI:57540"/>
    </ligand>
</feature>
<feature type="binding site" evidence="1">
    <location>
        <begin position="160"/>
        <end position="165"/>
    </location>
    <ligand>
        <name>NAD(+)</name>
        <dbReference type="ChEBI" id="CHEBI:57540"/>
    </ligand>
</feature>
<feature type="binding site" evidence="1">
    <location>
        <position position="184"/>
    </location>
    <ligand>
        <name>NAD(+)</name>
        <dbReference type="ChEBI" id="CHEBI:57540"/>
    </ligand>
</feature>
<keyword id="KW-0067">ATP-binding</keyword>
<keyword id="KW-0963">Cytoplasm</keyword>
<keyword id="KW-0418">Kinase</keyword>
<keyword id="KW-0520">NAD</keyword>
<keyword id="KW-0521">NADP</keyword>
<keyword id="KW-0547">Nucleotide-binding</keyword>
<keyword id="KW-1185">Reference proteome</keyword>
<keyword id="KW-0808">Transferase</keyword>
<protein>
    <recommendedName>
        <fullName evidence="1">NAD kinase</fullName>
        <ecNumber evidence="1">2.7.1.23</ecNumber>
    </recommendedName>
    <alternativeName>
        <fullName evidence="1">ATP-dependent NAD kinase</fullName>
    </alternativeName>
</protein>